<evidence type="ECO:0000250" key="1"/>
<evidence type="ECO:0000250" key="2">
    <source>
        <dbReference type="UniProtKB" id="P0CG47"/>
    </source>
</evidence>
<evidence type="ECO:0000255" key="3">
    <source>
        <dbReference type="PROSITE-ProRule" id="PRU00214"/>
    </source>
</evidence>
<evidence type="ECO:0000305" key="4"/>
<sequence length="76" mass="8565">MQIFVKTLTGKTITLEVEPSDTIENVKAKIQDKEGIPPDQQRLIFAGKQLEDGRTLSDYNIQKESTLHLVLRLRGG</sequence>
<feature type="chain" id="PRO_0000114793" description="Ubiquitin">
    <location>
        <begin position="1"/>
        <end position="76"/>
    </location>
</feature>
<feature type="domain" description="Ubiquitin-like" evidence="3">
    <location>
        <begin position="1"/>
        <end position="76"/>
    </location>
</feature>
<feature type="site" description="Interacts with activating enzyme">
    <location>
        <position position="54"/>
    </location>
</feature>
<feature type="site" description="Essential for function">
    <location>
        <position position="68"/>
    </location>
</feature>
<feature type="site" description="Interacts with activating enzyme">
    <location>
        <position position="72"/>
    </location>
</feature>
<feature type="cross-link" description="Glycyl lysine isopeptide (Lys-Gly) (interchain with G-Cter in ubiquitin)" evidence="2">
    <location>
        <position position="6"/>
    </location>
</feature>
<feature type="cross-link" description="Glycyl lysine isopeptide (Lys-Gly) (interchain with G-Cter in ubiquitin)" evidence="2">
    <location>
        <position position="11"/>
    </location>
</feature>
<feature type="cross-link" description="Glycyl lysine isopeptide (Lys-Gly) (interchain with G-Cter in ubiquitin)" evidence="2">
    <location>
        <position position="27"/>
    </location>
</feature>
<feature type="cross-link" description="Glycyl lysine isopeptide (Lys-Gly) (interchain with G-Cter in ubiquitin)" evidence="2">
    <location>
        <position position="29"/>
    </location>
</feature>
<feature type="cross-link" description="Glycyl lysine isopeptide (Lys-Gly) (interchain with G-Cter in ubiquitin)" evidence="2">
    <location>
        <position position="33"/>
    </location>
</feature>
<feature type="cross-link" description="Glycyl lysine isopeptide (Lys-Gly) (interchain with G-Cter in ubiquitin)" evidence="2">
    <location>
        <position position="48"/>
    </location>
</feature>
<feature type="cross-link" description="Glycyl lysine isopeptide (Lys-Gly) (interchain with G-Cter in ubiquitin)" evidence="2">
    <location>
        <position position="63"/>
    </location>
</feature>
<feature type="cross-link" description="Glycyl lysine isopeptide (Gly-Lys) (interchain with K-? in acceptor proteins)" evidence="3">
    <location>
        <position position="76"/>
    </location>
</feature>
<proteinExistence type="inferred from homology"/>
<reference key="1">
    <citation type="submission" date="2003-01" db="EMBL/GenBank/DDBJ databases">
        <title>Nucleotide and deduced amino acid sequence of a polyubiquitin gene (PUBC1) from Camel.</title>
        <authorList>
            <person name="Al-Khedhairy A.A."/>
        </authorList>
    </citation>
    <scope>NUCLEOTIDE SEQUENCE [GENOMIC DNA]</scope>
</reference>
<name>UBIQ_CAMDR</name>
<comment type="function">
    <text evidence="1">Ubiquitin Exists either covalently attached to another protein, or free (unanchored). When covalently bound, it is conjugated to target proteins via an isopeptide bond either as a monomer (monoubiquitin), a polymer linked via different Lys residues of the ubiquitin (polyubiquitin chains) or a linear polymer linked via the initiator Met of the ubiquitin (linear polyubiquitin chains). Polyubiquitin chains, when attached to a target protein, have different functions depending on the Lys residue of the ubiquitin that is linked: Lys-6-linked may be involved in DNA repair; Lys-11-linked is involved in ERAD (endoplasmic reticulum-associated degradation) and in cell-cycle regulation; Lys-29-linked is involved in proteotoxic stress response and cell cycle; Lys-33-linked is involved in kinase modification; Lys-48-linked is involved in protein degradation via the proteasome; Lys-63-linked is involved in endocytosis, DNA-damage responses as well as in signaling processes leading to activation of the transcription factor NF-kappa-B. Linear polymer chains formed via attachment by the initiator Met lead to cell signaling. Ubiquitin is usually conjugated to Lys residues of target proteins, however, in rare cases, conjugation to Cys or Ser residues has been observed. When polyubiquitin is free (unanchored-polyubiquitin), it also has distinct roles, such as in activation of protein kinases, and in signaling (By similarity).</text>
</comment>
<comment type="subcellular location">
    <subcellularLocation>
        <location evidence="1">Cytoplasm</location>
    </subcellularLocation>
    <subcellularLocation>
        <location evidence="1">Nucleus</location>
    </subcellularLocation>
</comment>
<comment type="miscellaneous">
    <text>Ubiquitin is synthesized as a polyubiquitin precursor with exact head to tail repeats, the number of repeats differ between species. In some species there is a final amino-acid after the last repeat. Some ubiquitin genes contain a single copy of ubiquitin fused to a ribosomal protein (either eL40 or eS31).</text>
</comment>
<comment type="similarity">
    <text evidence="4">Belongs to the ubiquitin family.</text>
</comment>
<protein>
    <recommendedName>
        <fullName>Ubiquitin</fullName>
    </recommendedName>
</protein>
<keyword id="KW-0963">Cytoplasm</keyword>
<keyword id="KW-1017">Isopeptide bond</keyword>
<keyword id="KW-0539">Nucleus</keyword>
<keyword id="KW-0832">Ubl conjugation</keyword>
<dbReference type="EMBL" id="AY225193">
    <property type="protein sequence ID" value="AAO66467.1"/>
    <property type="molecule type" value="Genomic_DNA"/>
</dbReference>
<dbReference type="SMR" id="Q865C5"/>
<dbReference type="STRING" id="9838.ENSCDRP00005014537"/>
<dbReference type="GO" id="GO:0005737">
    <property type="term" value="C:cytoplasm"/>
    <property type="evidence" value="ECO:0007669"/>
    <property type="project" value="UniProtKB-SubCell"/>
</dbReference>
<dbReference type="GO" id="GO:0005634">
    <property type="term" value="C:nucleus"/>
    <property type="evidence" value="ECO:0007669"/>
    <property type="project" value="UniProtKB-SubCell"/>
</dbReference>
<dbReference type="CDD" id="cd01803">
    <property type="entry name" value="Ubl_ubiquitin"/>
    <property type="match status" value="1"/>
</dbReference>
<dbReference type="FunFam" id="3.10.20.90:FF:000158">
    <property type="entry name" value="Polyubiquitin 5"/>
    <property type="match status" value="1"/>
</dbReference>
<dbReference type="Gene3D" id="3.10.20.90">
    <property type="entry name" value="Phosphatidylinositol 3-kinase Catalytic Subunit, Chain A, domain 1"/>
    <property type="match status" value="1"/>
</dbReference>
<dbReference type="InterPro" id="IPR000626">
    <property type="entry name" value="Ubiquitin-like_dom"/>
</dbReference>
<dbReference type="InterPro" id="IPR029071">
    <property type="entry name" value="Ubiquitin-like_domsf"/>
</dbReference>
<dbReference type="InterPro" id="IPR019954">
    <property type="entry name" value="Ubiquitin_CS"/>
</dbReference>
<dbReference type="InterPro" id="IPR019956">
    <property type="entry name" value="Ubiquitin_dom"/>
</dbReference>
<dbReference type="InterPro" id="IPR050158">
    <property type="entry name" value="Ubiquitin_ubiquitin-like"/>
</dbReference>
<dbReference type="PANTHER" id="PTHR10666">
    <property type="entry name" value="UBIQUITIN"/>
    <property type="match status" value="1"/>
</dbReference>
<dbReference type="Pfam" id="PF00240">
    <property type="entry name" value="ubiquitin"/>
    <property type="match status" value="1"/>
</dbReference>
<dbReference type="PRINTS" id="PR00348">
    <property type="entry name" value="UBIQUITIN"/>
</dbReference>
<dbReference type="SMART" id="SM00213">
    <property type="entry name" value="UBQ"/>
    <property type="match status" value="1"/>
</dbReference>
<dbReference type="SUPFAM" id="SSF54236">
    <property type="entry name" value="Ubiquitin-like"/>
    <property type="match status" value="1"/>
</dbReference>
<dbReference type="PROSITE" id="PS00299">
    <property type="entry name" value="UBIQUITIN_1"/>
    <property type="match status" value="1"/>
</dbReference>
<dbReference type="PROSITE" id="PS50053">
    <property type="entry name" value="UBIQUITIN_2"/>
    <property type="match status" value="1"/>
</dbReference>
<organism>
    <name type="scientific">Camelus dromedarius</name>
    <name type="common">Dromedary</name>
    <name type="synonym">Arabian camel</name>
    <dbReference type="NCBI Taxonomy" id="9838"/>
    <lineage>
        <taxon>Eukaryota</taxon>
        <taxon>Metazoa</taxon>
        <taxon>Chordata</taxon>
        <taxon>Craniata</taxon>
        <taxon>Vertebrata</taxon>
        <taxon>Euteleostomi</taxon>
        <taxon>Mammalia</taxon>
        <taxon>Eutheria</taxon>
        <taxon>Laurasiatheria</taxon>
        <taxon>Artiodactyla</taxon>
        <taxon>Tylopoda</taxon>
        <taxon>Camelidae</taxon>
        <taxon>Camelus</taxon>
    </lineage>
</organism>
<accession>Q865C5</accession>